<protein>
    <recommendedName>
        <fullName evidence="8">2-oxoglutarate dehydrogenase complex component E1</fullName>
        <shortName>E1o</shortName>
        <shortName>OGDC-E1</shortName>
        <shortName>OGDH-E1</shortName>
        <ecNumber evidence="1">1.2.4.2</ecNumber>
    </recommendedName>
    <alternativeName>
        <fullName>2-oxoglutarate dehydrogenase, mitochondrial</fullName>
    </alternativeName>
    <alternativeName>
        <fullName>Alpha-ketoglutarate dehydrogenase</fullName>
        <shortName>Alpha-KGDH-E1</shortName>
    </alternativeName>
    <alternativeName>
        <fullName>Thiamine diphosphate (ThDP)-dependent 2-oxoglutarate dehydrogenase</fullName>
    </alternativeName>
</protein>
<sequence length="1023" mass="116449">MFHLRTCAAKLRPLTASQTVKTFSQNKPAAIRTFQQIRCYSAPVAAEPFLSGTSSNYVEEMYCAWLENPKSVHKSWDIFFRNTNAGAPPGTAYQSPLSLSRSSLATMAHAQSLVEAQPNVDKLVEDHLAVQSLIRAYQIRGHHVAQLDPLGILDADLDSSVPADIISSTDKLGFYGLHESDLDKVFHLPTTTFIGGQEPALPLREIIRRLEMAYCQHIGVEFMFINDLEQCQWIRQKFETPGIMQFTNEEKRTLLARLVRSTRFEEFLQRKWSSEKRFGLEGCEVLIPALKTIIDMSSANGVDYVIMGMPHRGRLNVLANVIRKELEQIFCQFDSKLEAADEGSGDMKYHLGMYHRRINRVTDRNITLSLVANPSHLEAADPVVMGKTKAEQFYCGDTEGKKVMSILLHGDAAFAGQGIVYETFHLSDLPSYTTHGTVHVVVNNQIGFTTDPRMARSSPYPTDVARVVNAPIFHVNSDDPEAVMYVCKVAAEWRNTFHKDVVVDLVCYRRNGHNEMDEPMFTQPLMYKQIRKQKPVLQKYAELLVSQGVVNQPEYEEEISKYDKICEEAFTRSKDEKILHIKHWLDSPWPGFFTLDGQPRSMTCPSTGLEEDVLFHIGKVASSVPVENFTIHGGLSRILKTRRELVTNRTVDWALAEYMAFGSLLKEGIHVRLSGQDVERGTFSHRHHVLHDQNVDKRTCIPMNHLWPNQAPYTVCNSSLSEYGVLGFELGFAMASPNALVLWEAQFGDFNNMAQCIIDQFICPGQAKWVRQNGIVLLLPHGMEGMGPEHSSARPERFLQMCNDDPDVLPDLQEENFDINQLYDCNWIVVNCSTPGNFFHVLRRQILLPFRKPLIVFTPKSLLRHPEARTSFDEMLPGTHFQRVIPENGPAAQDPHKVKRLLFCTGKVYYDLTRERKARNMEEEVAITRIEQLSPFPFDLLLKEAQKYPNAELAWCQEEHKNQGYYDYVKPRLRTTIDRAKPVWYAGRDPAAAPATGNKKTHLTELQRFLDTAFDLDAFKKFS</sequence>
<feature type="transit peptide" description="Mitochondrion" evidence="4">
    <location>
        <begin position="1"/>
        <end position="40"/>
    </location>
</feature>
<feature type="chain" id="PRO_0000020434" description="2-oxoglutarate dehydrogenase complex component E1">
    <location>
        <begin position="41"/>
        <end position="1023"/>
    </location>
</feature>
<feature type="region of interest" description="Recognized by alloreactive CD8 cytotoxic T-lymphocytes in association with a class I MHC protein">
    <location>
        <begin position="933"/>
        <end position="939"/>
    </location>
</feature>
<feature type="binding site" evidence="1">
    <location>
        <position position="143"/>
    </location>
    <ligand>
        <name>Ca(2+)</name>
        <dbReference type="ChEBI" id="CHEBI:29108"/>
    </ligand>
</feature>
<feature type="binding site" evidence="1">
    <location>
        <position position="156"/>
    </location>
    <ligand>
        <name>Ca(2+)</name>
        <dbReference type="ChEBI" id="CHEBI:29108"/>
    </ligand>
</feature>
<feature type="binding site" evidence="1">
    <location>
        <position position="158"/>
    </location>
    <ligand>
        <name>Ca(2+)</name>
        <dbReference type="ChEBI" id="CHEBI:29108"/>
    </ligand>
</feature>
<feature type="binding site" evidence="1">
    <location>
        <position position="312"/>
    </location>
    <ligand>
        <name>thiamine diphosphate</name>
        <dbReference type="ChEBI" id="CHEBI:58937"/>
    </ligand>
</feature>
<feature type="binding site" evidence="1">
    <location>
        <position position="411"/>
    </location>
    <ligand>
        <name>Mg(2+)</name>
        <dbReference type="ChEBI" id="CHEBI:18420"/>
    </ligand>
</feature>
<feature type="binding site" evidence="1">
    <location>
        <position position="411"/>
    </location>
    <ligand>
        <name>thiamine diphosphate</name>
        <dbReference type="ChEBI" id="CHEBI:58937"/>
    </ligand>
</feature>
<feature type="binding site" evidence="1">
    <location>
        <position position="444"/>
    </location>
    <ligand>
        <name>Mg(2+)</name>
        <dbReference type="ChEBI" id="CHEBI:18420"/>
    </ligand>
</feature>
<feature type="binding site" evidence="1">
    <location>
        <position position="444"/>
    </location>
    <ligand>
        <name>thiamine diphosphate</name>
        <dbReference type="ChEBI" id="CHEBI:58937"/>
    </ligand>
</feature>
<feature type="binding site" evidence="1">
    <location>
        <position position="446"/>
    </location>
    <ligand>
        <name>Mg(2+)</name>
        <dbReference type="ChEBI" id="CHEBI:18420"/>
    </ligand>
</feature>
<feature type="binding site" evidence="1">
    <location>
        <position position="446"/>
    </location>
    <ligand>
        <name>thiamine diphosphate</name>
        <dbReference type="ChEBI" id="CHEBI:58937"/>
    </ligand>
</feature>
<feature type="binding site" evidence="1">
    <location>
        <position position="676"/>
    </location>
    <ligand>
        <name>thiamine diphosphate</name>
        <dbReference type="ChEBI" id="CHEBI:58937"/>
    </ligand>
</feature>
<feature type="modified residue" description="N6-succinyllysine" evidence="12">
    <location>
        <position position="74"/>
    </location>
</feature>
<feature type="modified residue" description="Phosphoserine" evidence="10">
    <location>
        <position position="100"/>
    </location>
</feature>
<feature type="modified residue" description="N6-acetyllysine" evidence="11">
    <location>
        <position position="401"/>
    </location>
</feature>
<feature type="modified residue" description="N6-succinyllysine" evidence="12">
    <location>
        <position position="564"/>
    </location>
</feature>
<feature type="modified residue" description="N6-acetyllysine" evidence="1">
    <location>
        <position position="970"/>
    </location>
</feature>
<feature type="cross-link" description="Glycyl lysine isopeptide (Lys-Gly) (interchain with G-Cter in ubiquitin)" evidence="1">
    <location>
        <position position="534"/>
    </location>
</feature>
<feature type="splice variant" id="VSP_024799" description="In isoform 2." evidence="6">
    <original>IRGHHVAQLDPLGILDADLDSSVPADIISSTDKL</original>
    <variation>VRGHHIAKSCVNFDDAPVTVSSNV</variation>
    <location>
        <begin position="139"/>
        <end position="172"/>
    </location>
</feature>
<feature type="splice variant" id="VSP_024800" description="In isoform 4." evidence="6">
    <original>IRGHHVAQLDPLGILDADLDSSVPADIISSTDKL</original>
    <variation>VRGHHIAKLDPLGISCVNFDDAPVTVSSNVDLAVFKERLRMLTVG</variation>
    <location>
        <begin position="139"/>
        <end position="172"/>
    </location>
</feature>
<feature type="splice variant" id="VSP_024801" description="In isoform 3." evidence="7">
    <original>L</original>
    <variation>LDLAVFKERLRMLTVG</variation>
    <location>
        <position position="172"/>
    </location>
</feature>
<feature type="sequence conflict" description="In Ref. 4; AAH49104." evidence="8" ref="4">
    <original>G</original>
    <variation>V</variation>
    <location>
        <position position="416"/>
    </location>
</feature>
<feature type="sequence conflict" description="In Ref. 4; AAH49104." evidence="8" ref="4">
    <original>V</original>
    <variation>F</variation>
    <location>
        <position position="549"/>
    </location>
</feature>
<feature type="sequence conflict" description="In Ref. 4; AAH57354." evidence="8" ref="4">
    <original>Q</original>
    <variation>E</variation>
    <location>
        <position position="552"/>
    </location>
</feature>
<feature type="sequence conflict" description="In Ref. 1; BAE29234." evidence="8" ref="1">
    <original>E</original>
    <variation>K</variation>
    <location>
        <position position="576"/>
    </location>
</feature>
<keyword id="KW-0002">3D-structure</keyword>
<keyword id="KW-0007">Acetylation</keyword>
<keyword id="KW-0025">Alternative splicing</keyword>
<keyword id="KW-0106">Calcium</keyword>
<keyword id="KW-0903">Direct protein sequencing</keyword>
<keyword id="KW-0324">Glycolysis</keyword>
<keyword id="KW-1017">Isopeptide bond</keyword>
<keyword id="KW-0460">Magnesium</keyword>
<keyword id="KW-0479">Metal-binding</keyword>
<keyword id="KW-0496">Mitochondrion</keyword>
<keyword id="KW-0539">Nucleus</keyword>
<keyword id="KW-0560">Oxidoreductase</keyword>
<keyword id="KW-0597">Phosphoprotein</keyword>
<keyword id="KW-1185">Reference proteome</keyword>
<keyword id="KW-0786">Thiamine pyrophosphate</keyword>
<keyword id="KW-0809">Transit peptide</keyword>
<keyword id="KW-0832">Ubl conjugation</keyword>
<gene>
    <name evidence="9" type="primary">Ogdh</name>
    <name type="synonym">Kiaa4192</name>
</gene>
<organism>
    <name type="scientific">Mus musculus</name>
    <name type="common">Mouse</name>
    <dbReference type="NCBI Taxonomy" id="10090"/>
    <lineage>
        <taxon>Eukaryota</taxon>
        <taxon>Metazoa</taxon>
        <taxon>Chordata</taxon>
        <taxon>Craniata</taxon>
        <taxon>Vertebrata</taxon>
        <taxon>Euteleostomi</taxon>
        <taxon>Mammalia</taxon>
        <taxon>Eutheria</taxon>
        <taxon>Euarchontoglires</taxon>
        <taxon>Glires</taxon>
        <taxon>Rodentia</taxon>
        <taxon>Myomorpha</taxon>
        <taxon>Muroidea</taxon>
        <taxon>Muridae</taxon>
        <taxon>Murinae</taxon>
        <taxon>Mus</taxon>
        <taxon>Mus</taxon>
    </lineage>
</organism>
<evidence type="ECO:0000250" key="1">
    <source>
        <dbReference type="UniProtKB" id="Q02218"/>
    </source>
</evidence>
<evidence type="ECO:0000250" key="2">
    <source>
        <dbReference type="UniProtKB" id="Q5XI78"/>
    </source>
</evidence>
<evidence type="ECO:0000250" key="3">
    <source>
        <dbReference type="UniProtKB" id="Q96HY7"/>
    </source>
</evidence>
<evidence type="ECO:0000255" key="4"/>
<evidence type="ECO:0000269" key="5">
    <source>
    </source>
</evidence>
<evidence type="ECO:0000303" key="6">
    <source>
    </source>
</evidence>
<evidence type="ECO:0000303" key="7">
    <source ref="2"/>
</evidence>
<evidence type="ECO:0000305" key="8"/>
<evidence type="ECO:0000312" key="9">
    <source>
        <dbReference type="MGI" id="MGI:1098267"/>
    </source>
</evidence>
<evidence type="ECO:0007744" key="10">
    <source>
    </source>
</evidence>
<evidence type="ECO:0007744" key="11">
    <source>
    </source>
</evidence>
<evidence type="ECO:0007744" key="12">
    <source>
    </source>
</evidence>
<comment type="function">
    <text evidence="1">2-oxoglutarate dehydrogenase (E1o) component of the 2-oxoglutarate dehydrogenase complex (OGDHC). Participates in the first step, rate limiting for the overall conversion of 2-oxoglutarate to succinyl-CoA and CO(2) catalyzed by the whole OGDHC. Catalyzes the irreversible decarboxylation of 2-oxoglutarate (alpha-ketoglutarate) via the thiamine diphosphate (ThDP) cofactor and subsequent transfer of the decarboxylated acyl intermediate on an oxidized dihydrolipoyl group that is covalently amidated to the E2 enzyme (dihydrolipoyllysine-residue succinyltransferase or DLST). Plays a key role in the Krebs (citric acid) cycle, which is a common pathway for oxidation of fuel molecules, including carbohydrates, fatty acids, and amino acids. Can catalyze the decarboxylation of 2-oxoadipate in vitro, but at a much lower rate than 2-oxoglutarate. Mainly active in the mitochondrion. A fraction of the 2-oxoglutarate dehydrogenase complex also localizes in the nucleus and is required for lysine succinylation of histones: associates with KAT2A on chromatin and provides succinyl-CoA to histone succinyltransferase KAT2A.</text>
</comment>
<comment type="catalytic activity">
    <reaction evidence="1">
        <text>N(6)-[(R)-lipoyl]-L-lysyl-[protein] + 2-oxoglutarate + H(+) = N(6)-[(R)-S(8)-succinyldihydrolipoyl]-L-lysyl-[protein] + CO2</text>
        <dbReference type="Rhea" id="RHEA:12188"/>
        <dbReference type="Rhea" id="RHEA-COMP:10474"/>
        <dbReference type="Rhea" id="RHEA-COMP:20092"/>
        <dbReference type="ChEBI" id="CHEBI:15378"/>
        <dbReference type="ChEBI" id="CHEBI:16526"/>
        <dbReference type="ChEBI" id="CHEBI:16810"/>
        <dbReference type="ChEBI" id="CHEBI:83099"/>
        <dbReference type="ChEBI" id="CHEBI:83120"/>
        <dbReference type="EC" id="1.2.4.2"/>
    </reaction>
    <physiologicalReaction direction="left-to-right" evidence="1">
        <dbReference type="Rhea" id="RHEA:12189"/>
    </physiologicalReaction>
</comment>
<comment type="cofactor">
    <cofactor evidence="1">
        <name>thiamine diphosphate</name>
        <dbReference type="ChEBI" id="CHEBI:58937"/>
    </cofactor>
    <cofactor evidence="1">
        <name>Mg(2+)</name>
        <dbReference type="ChEBI" id="CHEBI:18420"/>
    </cofactor>
</comment>
<comment type="activity regulation">
    <text evidence="1">Calcium ions and ADP stimulate, whereas ATP and NADH reduce catalytic activity.</text>
</comment>
<comment type="subunit">
    <text evidence="1 5">Homodimer (By similarity). The 2-oxoglutarate dehydrogenase complex is composed of OGDH (2-oxoglutarate dehydrogenase; E1), DLST (dihydrolipoamide succinyltransferase; E2), DLD (dihydrolipoamide dehydrogenase; E3) and the assembly factor KGD4 (PubMed:36854377). It contains multiple copies of the three enzymatic components (E1, E2 and E3). In the nucleus, the 2-oxoglutarate dehydrogenase complex associates with KAT2A. Interacts with ABHD11; this interaction maintains the functional lipoylation of the 2-oxoglutarate dehydrogenase complex (By similarity).</text>
</comment>
<comment type="subcellular location">
    <subcellularLocation>
        <location evidence="2">Mitochondrion</location>
    </subcellularLocation>
    <subcellularLocation>
        <location evidence="1">Nucleus</location>
    </subcellularLocation>
    <text evidence="1">Mainly localizes in the mitochondrion. A small fraction localizes to the nucleus, where the 2-oxoglutarate dehydrogenase complex is required for histone succinylation.</text>
</comment>
<comment type="alternative products">
    <event type="alternative splicing"/>
    <isoform>
        <id>Q60597-1</id>
        <name>1</name>
        <sequence type="displayed"/>
    </isoform>
    <isoform>
        <id>Q60597-2</id>
        <name>2</name>
        <sequence type="described" ref="VSP_024799"/>
    </isoform>
    <isoform>
        <id>Q60597-3</id>
        <name>3</name>
        <sequence type="described" ref="VSP_024801"/>
    </isoform>
    <isoform>
        <id>Q60597-4</id>
        <name>4</name>
        <sequence type="described" ref="VSP_024800"/>
    </isoform>
</comment>
<comment type="miscellaneous">
    <text evidence="3">The mitochondrial 2-oxoglutarate and 2-oxoadipate dehydrogenase complexes (OGDHC and OADHC, respectively) share their E2 (DLST) and E3 (dihydrolipoyl dehydrogenase or DLD) components, but the E1 component is specific to each complex (E1o and E1a (DHTK1), respectively).</text>
</comment>
<comment type="similarity">
    <text evidence="8">Belongs to the alpha-ketoglutarate dehydrogenase family.</text>
</comment>
<comment type="sequence caution" evidence="8">
    <conflict type="erroneous initiation">
        <sequence resource="EMBL-CDS" id="AAH31165"/>
    </conflict>
    <text>Truncated N-terminus.</text>
</comment>
<comment type="sequence caution" evidence="8">
    <conflict type="erroneous initiation">
        <sequence resource="EMBL-CDS" id="BAD90530"/>
    </conflict>
    <text>Extended N-terminus.</text>
</comment>
<proteinExistence type="evidence at protein level"/>
<dbReference type="EC" id="1.2.4.2" evidence="1"/>
<dbReference type="EMBL" id="AK147289">
    <property type="protein sequence ID" value="BAE27824.1"/>
    <property type="molecule type" value="mRNA"/>
</dbReference>
<dbReference type="EMBL" id="AK150009">
    <property type="protein sequence ID" value="BAE29234.1"/>
    <property type="molecule type" value="mRNA"/>
</dbReference>
<dbReference type="EMBL" id="AK169286">
    <property type="protein sequence ID" value="BAE41044.1"/>
    <property type="molecule type" value="mRNA"/>
</dbReference>
<dbReference type="EMBL" id="AK220536">
    <property type="protein sequence ID" value="BAD90530.1"/>
    <property type="status" value="ALT_INIT"/>
    <property type="molecule type" value="mRNA"/>
</dbReference>
<dbReference type="EMBL" id="AL607152">
    <property type="status" value="NOT_ANNOTATED_CDS"/>
    <property type="molecule type" value="Genomic_DNA"/>
</dbReference>
<dbReference type="EMBL" id="BC025040">
    <property type="protein sequence ID" value="AAH25040.1"/>
    <property type="molecule type" value="mRNA"/>
</dbReference>
<dbReference type="EMBL" id="BC013670">
    <property type="protein sequence ID" value="AAH13670.1"/>
    <property type="molecule type" value="mRNA"/>
</dbReference>
<dbReference type="EMBL" id="BC029143">
    <property type="protein sequence ID" value="AAH29143.1"/>
    <property type="molecule type" value="mRNA"/>
</dbReference>
<dbReference type="EMBL" id="BC031165">
    <property type="protein sequence ID" value="AAH31165.1"/>
    <property type="status" value="ALT_INIT"/>
    <property type="molecule type" value="mRNA"/>
</dbReference>
<dbReference type="EMBL" id="BC049104">
    <property type="protein sequence ID" value="AAH49104.1"/>
    <property type="molecule type" value="mRNA"/>
</dbReference>
<dbReference type="EMBL" id="BC057354">
    <property type="protein sequence ID" value="AAH57354.1"/>
    <property type="molecule type" value="mRNA"/>
</dbReference>
<dbReference type="EMBL" id="U02971">
    <property type="protein sequence ID" value="AAC52130.1"/>
    <property type="molecule type" value="mRNA"/>
</dbReference>
<dbReference type="CCDS" id="CCDS36106.1">
    <molecule id="Q60597-1"/>
</dbReference>
<dbReference type="CCDS" id="CCDS56758.1">
    <molecule id="Q60597-4"/>
</dbReference>
<dbReference type="PIR" id="I48884">
    <property type="entry name" value="A41911"/>
</dbReference>
<dbReference type="RefSeq" id="NP_001239211.1">
    <molecule id="Q60597-3"/>
    <property type="nucleotide sequence ID" value="NM_001252282.1"/>
</dbReference>
<dbReference type="RefSeq" id="NP_001239212.1">
    <molecule id="Q60597-4"/>
    <property type="nucleotide sequence ID" value="NM_001252283.1"/>
</dbReference>
<dbReference type="RefSeq" id="NP_001239216.1">
    <molecule id="Q60597-1"/>
    <property type="nucleotide sequence ID" value="NM_001252287.2"/>
</dbReference>
<dbReference type="RefSeq" id="NP_001239217.1">
    <property type="nucleotide sequence ID" value="NM_001252288.1"/>
</dbReference>
<dbReference type="RefSeq" id="NP_001348831.1">
    <molecule id="Q60597-4"/>
    <property type="nucleotide sequence ID" value="NM_001361902.1"/>
</dbReference>
<dbReference type="RefSeq" id="NP_001348832.1">
    <molecule id="Q60597-4"/>
    <property type="nucleotide sequence ID" value="NM_001361903.1"/>
</dbReference>
<dbReference type="RefSeq" id="NP_001348833.1">
    <molecule id="Q60597-1"/>
    <property type="nucleotide sequence ID" value="NM_001361904.1"/>
</dbReference>
<dbReference type="RefSeq" id="NP_035086.2">
    <molecule id="Q60597-1"/>
    <property type="nucleotide sequence ID" value="NM_010956.4"/>
</dbReference>
<dbReference type="RefSeq" id="XP_006514645.1">
    <molecule id="Q60597-4"/>
    <property type="nucleotide sequence ID" value="XM_006514582.3"/>
</dbReference>
<dbReference type="RefSeq" id="XP_006514646.1">
    <property type="nucleotide sequence ID" value="XM_006514583.3"/>
</dbReference>
<dbReference type="RefSeq" id="XP_006514647.1">
    <molecule id="Q60597-4"/>
    <property type="nucleotide sequence ID" value="XM_006514584.4"/>
</dbReference>
<dbReference type="RefSeq" id="XP_006514648.1">
    <property type="nucleotide sequence ID" value="XM_006514585.2"/>
</dbReference>
<dbReference type="RefSeq" id="XP_017169826.1">
    <property type="nucleotide sequence ID" value="XM_017314337.1"/>
</dbReference>
<dbReference type="RefSeq" id="XP_030101508.1">
    <molecule id="Q60597-1"/>
    <property type="nucleotide sequence ID" value="XM_030245648.1"/>
</dbReference>
<dbReference type="RefSeq" id="XP_030101509.1">
    <molecule id="Q60597-1"/>
    <property type="nucleotide sequence ID" value="XM_030245649.2"/>
</dbReference>
<dbReference type="PDB" id="3E2H">
    <property type="method" value="X-ray"/>
    <property type="resolution" value="3.80 A"/>
    <property type="chains" value="Q=932-940"/>
</dbReference>
<dbReference type="PDB" id="3TF7">
    <property type="method" value="X-ray"/>
    <property type="resolution" value="2.75 A"/>
    <property type="chains" value="B/F=932-940"/>
</dbReference>
<dbReference type="PDBsum" id="3E2H"/>
<dbReference type="PDBsum" id="3TF7"/>
<dbReference type="SMR" id="Q60597"/>
<dbReference type="BioGRID" id="201905">
    <property type="interactions" value="33"/>
</dbReference>
<dbReference type="FunCoup" id="Q60597">
    <property type="interactions" value="2435"/>
</dbReference>
<dbReference type="IntAct" id="Q60597">
    <property type="interactions" value="7"/>
</dbReference>
<dbReference type="MINT" id="Q60597"/>
<dbReference type="STRING" id="10090.ENSMUSP00000091041"/>
<dbReference type="ChEMBL" id="CHEMBL2176831"/>
<dbReference type="GlyGen" id="Q60597">
    <property type="glycosylation" value="1 site, 1 O-linked glycan (1 site)"/>
</dbReference>
<dbReference type="iPTMnet" id="Q60597"/>
<dbReference type="PhosphoSitePlus" id="Q60597"/>
<dbReference type="SwissPalm" id="Q60597"/>
<dbReference type="REPRODUCTION-2DPAGE" id="Q60597"/>
<dbReference type="jPOST" id="Q60597"/>
<dbReference type="PaxDb" id="10090-ENSMUSP00000003461"/>
<dbReference type="PeptideAtlas" id="Q60597"/>
<dbReference type="ProteomicsDB" id="289960">
    <molecule id="Q60597-1"/>
</dbReference>
<dbReference type="ProteomicsDB" id="289961">
    <molecule id="Q60597-2"/>
</dbReference>
<dbReference type="ProteomicsDB" id="289962">
    <molecule id="Q60597-3"/>
</dbReference>
<dbReference type="ProteomicsDB" id="289963">
    <molecule id="Q60597-4"/>
</dbReference>
<dbReference type="Pumba" id="Q60597"/>
<dbReference type="ABCD" id="Q60597">
    <property type="antibodies" value="1 sequenced antibody"/>
</dbReference>
<dbReference type="Antibodypedia" id="13451">
    <property type="antibodies" value="235 antibodies from 28 providers"/>
</dbReference>
<dbReference type="DNASU" id="18293"/>
<dbReference type="Ensembl" id="ENSMUST00000003461.15">
    <molecule id="Q60597-1"/>
    <property type="protein sequence ID" value="ENSMUSP00000003461.9"/>
    <property type="gene ID" value="ENSMUSG00000020456.18"/>
</dbReference>
<dbReference type="Ensembl" id="ENSMUST00000093350.10">
    <molecule id="Q60597-4"/>
    <property type="protein sequence ID" value="ENSMUSP00000091041.4"/>
    <property type="gene ID" value="ENSMUSG00000020456.18"/>
</dbReference>
<dbReference type="Ensembl" id="ENSMUST00000101554.9">
    <molecule id="Q60597-1"/>
    <property type="protein sequence ID" value="ENSMUSP00000099090.3"/>
    <property type="gene ID" value="ENSMUSG00000020456.18"/>
</dbReference>
<dbReference type="GeneID" id="18293"/>
<dbReference type="KEGG" id="mmu:18293"/>
<dbReference type="UCSC" id="uc007hyf.2">
    <molecule id="Q60597-1"/>
    <property type="organism name" value="mouse"/>
</dbReference>
<dbReference type="UCSC" id="uc007hyg.2">
    <molecule id="Q60597-3"/>
    <property type="organism name" value="mouse"/>
</dbReference>
<dbReference type="UCSC" id="uc007hyh.2">
    <molecule id="Q60597-4"/>
    <property type="organism name" value="mouse"/>
</dbReference>
<dbReference type="AGR" id="MGI:1098267"/>
<dbReference type="CTD" id="4967"/>
<dbReference type="MGI" id="MGI:1098267">
    <property type="gene designation" value="Ogdh"/>
</dbReference>
<dbReference type="VEuPathDB" id="HostDB:ENSMUSG00000020456"/>
<dbReference type="eggNOG" id="KOG0450">
    <property type="taxonomic scope" value="Eukaryota"/>
</dbReference>
<dbReference type="GeneTree" id="ENSGT00950000183125"/>
<dbReference type="HOGENOM" id="CLU_004709_1_1_1"/>
<dbReference type="InParanoid" id="Q60597"/>
<dbReference type="OMA" id="RDSYCRT"/>
<dbReference type="OrthoDB" id="5534at9989"/>
<dbReference type="PhylomeDB" id="Q60597"/>
<dbReference type="TreeFam" id="TF300695"/>
<dbReference type="Reactome" id="R-MMU-6783984">
    <property type="pathway name" value="Glycine degradation"/>
</dbReference>
<dbReference type="Reactome" id="R-MMU-9837999">
    <property type="pathway name" value="Mitochondrial protein degradation"/>
</dbReference>
<dbReference type="Reactome" id="R-MMU-9853506">
    <property type="pathway name" value="OGDH complex synthesizes succinyl-CoA from 2-OG"/>
</dbReference>
<dbReference type="BioGRID-ORCS" id="18293">
    <property type="hits" value="25 hits in 77 CRISPR screens"/>
</dbReference>
<dbReference type="CD-CODE" id="CE726F99">
    <property type="entry name" value="Postsynaptic density"/>
</dbReference>
<dbReference type="ChiTaRS" id="Ogdh">
    <property type="organism name" value="mouse"/>
</dbReference>
<dbReference type="EvolutionaryTrace" id="Q60597"/>
<dbReference type="PRO" id="PR:Q60597"/>
<dbReference type="Proteomes" id="UP000000589">
    <property type="component" value="Chromosome 11"/>
</dbReference>
<dbReference type="RNAct" id="Q60597">
    <property type="molecule type" value="protein"/>
</dbReference>
<dbReference type="Bgee" id="ENSMUSG00000020456">
    <property type="expression patterns" value="Expressed in myocardium of ventricle and 284 other cell types or tissues"/>
</dbReference>
<dbReference type="ExpressionAtlas" id="Q60597">
    <property type="expression patterns" value="baseline and differential"/>
</dbReference>
<dbReference type="GO" id="GO:0031966">
    <property type="term" value="C:mitochondrial membrane"/>
    <property type="evidence" value="ECO:0000250"/>
    <property type="project" value="UniProtKB"/>
</dbReference>
<dbReference type="GO" id="GO:0005739">
    <property type="term" value="C:mitochondrion"/>
    <property type="evidence" value="ECO:0000314"/>
    <property type="project" value="MGI"/>
</dbReference>
<dbReference type="GO" id="GO:0005634">
    <property type="term" value="C:nucleus"/>
    <property type="evidence" value="ECO:0000250"/>
    <property type="project" value="UniProtKB"/>
</dbReference>
<dbReference type="GO" id="GO:0045252">
    <property type="term" value="C:oxoglutarate dehydrogenase complex"/>
    <property type="evidence" value="ECO:0000250"/>
    <property type="project" value="UniProtKB"/>
</dbReference>
<dbReference type="GO" id="GO:0031072">
    <property type="term" value="F:heat shock protein binding"/>
    <property type="evidence" value="ECO:0007669"/>
    <property type="project" value="Ensembl"/>
</dbReference>
<dbReference type="GO" id="GO:0046872">
    <property type="term" value="F:metal ion binding"/>
    <property type="evidence" value="ECO:0007669"/>
    <property type="project" value="UniProtKB-KW"/>
</dbReference>
<dbReference type="GO" id="GO:0034602">
    <property type="term" value="F:oxoglutarate dehydrogenase (NAD+) activity"/>
    <property type="evidence" value="ECO:0000314"/>
    <property type="project" value="MGI"/>
</dbReference>
<dbReference type="GO" id="GO:0004591">
    <property type="term" value="F:oxoglutarate dehydrogenase (succinyl-transferring) activity"/>
    <property type="evidence" value="ECO:0000250"/>
    <property type="project" value="UniProtKB"/>
</dbReference>
<dbReference type="GO" id="GO:0051087">
    <property type="term" value="F:protein-folding chaperone binding"/>
    <property type="evidence" value="ECO:0007669"/>
    <property type="project" value="Ensembl"/>
</dbReference>
<dbReference type="GO" id="GO:0030976">
    <property type="term" value="F:thiamine pyrophosphate binding"/>
    <property type="evidence" value="ECO:0000250"/>
    <property type="project" value="UniProtKB"/>
</dbReference>
<dbReference type="GO" id="GO:0006103">
    <property type="term" value="P:2-oxoglutarate metabolic process"/>
    <property type="evidence" value="ECO:0000250"/>
    <property type="project" value="UniProtKB"/>
</dbReference>
<dbReference type="GO" id="GO:0021695">
    <property type="term" value="P:cerebellar cortex development"/>
    <property type="evidence" value="ECO:0000270"/>
    <property type="project" value="UniProtKB"/>
</dbReference>
<dbReference type="GO" id="GO:0006091">
    <property type="term" value="P:generation of precursor metabolites and energy"/>
    <property type="evidence" value="ECO:0000250"/>
    <property type="project" value="UniProtKB"/>
</dbReference>
<dbReference type="GO" id="GO:0006096">
    <property type="term" value="P:glycolytic process"/>
    <property type="evidence" value="ECO:0007669"/>
    <property type="project" value="UniProtKB-KW"/>
</dbReference>
<dbReference type="GO" id="GO:0021766">
    <property type="term" value="P:hippocampus development"/>
    <property type="evidence" value="ECO:0000270"/>
    <property type="project" value="UniProtKB"/>
</dbReference>
<dbReference type="GO" id="GO:0006734">
    <property type="term" value="P:NADH metabolic process"/>
    <property type="evidence" value="ECO:0007669"/>
    <property type="project" value="Ensembl"/>
</dbReference>
<dbReference type="GO" id="GO:0061034">
    <property type="term" value="P:olfactory bulb mitral cell layer development"/>
    <property type="evidence" value="ECO:0000270"/>
    <property type="project" value="UniProtKB"/>
</dbReference>
<dbReference type="GO" id="GO:0021860">
    <property type="term" value="P:pyramidal neuron development"/>
    <property type="evidence" value="ECO:0000270"/>
    <property type="project" value="UniProtKB"/>
</dbReference>
<dbReference type="GO" id="GO:0021756">
    <property type="term" value="P:striatum development"/>
    <property type="evidence" value="ECO:0000270"/>
    <property type="project" value="UniProtKB"/>
</dbReference>
<dbReference type="GO" id="GO:0006104">
    <property type="term" value="P:succinyl-CoA metabolic process"/>
    <property type="evidence" value="ECO:0000250"/>
    <property type="project" value="UniProtKB"/>
</dbReference>
<dbReference type="GO" id="GO:0022028">
    <property type="term" value="P:tangential migration from the subventricular zone to the olfactory bulb"/>
    <property type="evidence" value="ECO:0000270"/>
    <property type="project" value="UniProtKB"/>
</dbReference>
<dbReference type="GO" id="GO:0021794">
    <property type="term" value="P:thalamus development"/>
    <property type="evidence" value="ECO:0000270"/>
    <property type="project" value="UniProtKB"/>
</dbReference>
<dbReference type="GO" id="GO:0006099">
    <property type="term" value="P:tricarboxylic acid cycle"/>
    <property type="evidence" value="ECO:0007669"/>
    <property type="project" value="Ensembl"/>
</dbReference>
<dbReference type="CDD" id="cd02016">
    <property type="entry name" value="TPP_E1_OGDC_like"/>
    <property type="match status" value="1"/>
</dbReference>
<dbReference type="FunFam" id="3.40.50.12470:FF:000007">
    <property type="entry name" value="2-oxoglutarate dehydrogenase e1 mitochondrial"/>
    <property type="match status" value="1"/>
</dbReference>
<dbReference type="FunFam" id="3.40.50.970:FF:000002">
    <property type="entry name" value="2-oxoglutarate dehydrogenase, E1 component"/>
    <property type="match status" value="1"/>
</dbReference>
<dbReference type="FunFam" id="1.10.287.1150:FF:000001">
    <property type="entry name" value="2-oxoglutarate dehydrogenase, mitochondrial isoform X1"/>
    <property type="match status" value="1"/>
</dbReference>
<dbReference type="FunFam" id="3.40.50.11610:FF:000008">
    <property type="entry name" value="2-oxoglutarate dehydrogenase, mitochondrial isoform X4"/>
    <property type="match status" value="1"/>
</dbReference>
<dbReference type="Gene3D" id="3.40.50.12470">
    <property type="match status" value="1"/>
</dbReference>
<dbReference type="Gene3D" id="3.40.50.970">
    <property type="match status" value="1"/>
</dbReference>
<dbReference type="Gene3D" id="3.40.50.11610">
    <property type="entry name" value="Multifunctional 2-oxoglutarate metabolism enzyme, C-terminal domain"/>
    <property type="match status" value="1"/>
</dbReference>
<dbReference type="Gene3D" id="1.10.287.1150">
    <property type="entry name" value="TPP helical domain"/>
    <property type="match status" value="1"/>
</dbReference>
<dbReference type="InterPro" id="IPR032106">
    <property type="entry name" value="2-oxogl_dehyd_N"/>
</dbReference>
<dbReference type="InterPro" id="IPR011603">
    <property type="entry name" value="2oxoglutarate_DH_E1"/>
</dbReference>
<dbReference type="InterPro" id="IPR001017">
    <property type="entry name" value="DH_E1"/>
</dbReference>
<dbReference type="InterPro" id="IPR042179">
    <property type="entry name" value="KGD_C_sf"/>
</dbReference>
<dbReference type="InterPro" id="IPR031717">
    <property type="entry name" value="ODO-1/KGD_C"/>
</dbReference>
<dbReference type="InterPro" id="IPR029061">
    <property type="entry name" value="THDP-binding"/>
</dbReference>
<dbReference type="InterPro" id="IPR005475">
    <property type="entry name" value="Transketolase-like_Pyr-bd"/>
</dbReference>
<dbReference type="NCBIfam" id="TIGR00239">
    <property type="entry name" value="2oxo_dh_E1"/>
    <property type="match status" value="1"/>
</dbReference>
<dbReference type="NCBIfam" id="NF006914">
    <property type="entry name" value="PRK09404.1"/>
    <property type="match status" value="1"/>
</dbReference>
<dbReference type="NCBIfam" id="NF008907">
    <property type="entry name" value="PRK12270.1"/>
    <property type="match status" value="1"/>
</dbReference>
<dbReference type="PANTHER" id="PTHR23152">
    <property type="entry name" value="2-OXOGLUTARATE DEHYDROGENASE"/>
    <property type="match status" value="1"/>
</dbReference>
<dbReference type="PANTHER" id="PTHR23152:SF7">
    <property type="entry name" value="2-OXOGLUTARATE DEHYDROGENASE COMPLEX COMPONENT E1"/>
    <property type="match status" value="1"/>
</dbReference>
<dbReference type="Pfam" id="PF16078">
    <property type="entry name" value="2-oxogl_dehyd_N"/>
    <property type="match status" value="1"/>
</dbReference>
<dbReference type="Pfam" id="PF00676">
    <property type="entry name" value="E1_dh"/>
    <property type="match status" value="1"/>
</dbReference>
<dbReference type="Pfam" id="PF16870">
    <property type="entry name" value="OxoGdeHyase_C"/>
    <property type="match status" value="1"/>
</dbReference>
<dbReference type="Pfam" id="PF02779">
    <property type="entry name" value="Transket_pyr"/>
    <property type="match status" value="1"/>
</dbReference>
<dbReference type="PIRSF" id="PIRSF000157">
    <property type="entry name" value="Oxoglu_dh_E1"/>
    <property type="match status" value="1"/>
</dbReference>
<dbReference type="SMART" id="SM00861">
    <property type="entry name" value="Transket_pyr"/>
    <property type="match status" value="1"/>
</dbReference>
<dbReference type="SUPFAM" id="SSF52518">
    <property type="entry name" value="Thiamin diphosphate-binding fold (THDP-binding)"/>
    <property type="match status" value="2"/>
</dbReference>
<accession>Q60597</accession>
<accession>Q3UDM7</accession>
<accession>Q5DTI4</accession>
<accession>Q5SVX7</accession>
<accession>Q5SVX9</accession>
<accession>Q6PFZ2</accession>
<accession>Q80Y57</accession>
<accession>Q8K0K7</accession>
<accession>Q8K2Z3</accession>
<accession>Q8R3M2</accession>
<accession>Q91WP2</accession>
<name>ODO1_MOUSE</name>
<reference key="1">
    <citation type="journal article" date="2005" name="Science">
        <title>The transcriptional landscape of the mammalian genome.</title>
        <authorList>
            <person name="Carninci P."/>
            <person name="Kasukawa T."/>
            <person name="Katayama S."/>
            <person name="Gough J."/>
            <person name="Frith M.C."/>
            <person name="Maeda N."/>
            <person name="Oyama R."/>
            <person name="Ravasi T."/>
            <person name="Lenhard B."/>
            <person name="Wells C."/>
            <person name="Kodzius R."/>
            <person name="Shimokawa K."/>
            <person name="Bajic V.B."/>
            <person name="Brenner S.E."/>
            <person name="Batalov S."/>
            <person name="Forrest A.R."/>
            <person name="Zavolan M."/>
            <person name="Davis M.J."/>
            <person name="Wilming L.G."/>
            <person name="Aidinis V."/>
            <person name="Allen J.E."/>
            <person name="Ambesi-Impiombato A."/>
            <person name="Apweiler R."/>
            <person name="Aturaliya R.N."/>
            <person name="Bailey T.L."/>
            <person name="Bansal M."/>
            <person name="Baxter L."/>
            <person name="Beisel K.W."/>
            <person name="Bersano T."/>
            <person name="Bono H."/>
            <person name="Chalk A.M."/>
            <person name="Chiu K.P."/>
            <person name="Choudhary V."/>
            <person name="Christoffels A."/>
            <person name="Clutterbuck D.R."/>
            <person name="Crowe M.L."/>
            <person name="Dalla E."/>
            <person name="Dalrymple B.P."/>
            <person name="de Bono B."/>
            <person name="Della Gatta G."/>
            <person name="di Bernardo D."/>
            <person name="Down T."/>
            <person name="Engstrom P."/>
            <person name="Fagiolini M."/>
            <person name="Faulkner G."/>
            <person name="Fletcher C.F."/>
            <person name="Fukushima T."/>
            <person name="Furuno M."/>
            <person name="Futaki S."/>
            <person name="Gariboldi M."/>
            <person name="Georgii-Hemming P."/>
            <person name="Gingeras T.R."/>
            <person name="Gojobori T."/>
            <person name="Green R.E."/>
            <person name="Gustincich S."/>
            <person name="Harbers M."/>
            <person name="Hayashi Y."/>
            <person name="Hensch T.K."/>
            <person name="Hirokawa N."/>
            <person name="Hill D."/>
            <person name="Huminiecki L."/>
            <person name="Iacono M."/>
            <person name="Ikeo K."/>
            <person name="Iwama A."/>
            <person name="Ishikawa T."/>
            <person name="Jakt M."/>
            <person name="Kanapin A."/>
            <person name="Katoh M."/>
            <person name="Kawasawa Y."/>
            <person name="Kelso J."/>
            <person name="Kitamura H."/>
            <person name="Kitano H."/>
            <person name="Kollias G."/>
            <person name="Krishnan S.P."/>
            <person name="Kruger A."/>
            <person name="Kummerfeld S.K."/>
            <person name="Kurochkin I.V."/>
            <person name="Lareau L.F."/>
            <person name="Lazarevic D."/>
            <person name="Lipovich L."/>
            <person name="Liu J."/>
            <person name="Liuni S."/>
            <person name="McWilliam S."/>
            <person name="Madan Babu M."/>
            <person name="Madera M."/>
            <person name="Marchionni L."/>
            <person name="Matsuda H."/>
            <person name="Matsuzawa S."/>
            <person name="Miki H."/>
            <person name="Mignone F."/>
            <person name="Miyake S."/>
            <person name="Morris K."/>
            <person name="Mottagui-Tabar S."/>
            <person name="Mulder N."/>
            <person name="Nakano N."/>
            <person name="Nakauchi H."/>
            <person name="Ng P."/>
            <person name="Nilsson R."/>
            <person name="Nishiguchi S."/>
            <person name="Nishikawa S."/>
            <person name="Nori F."/>
            <person name="Ohara O."/>
            <person name="Okazaki Y."/>
            <person name="Orlando V."/>
            <person name="Pang K.C."/>
            <person name="Pavan W.J."/>
            <person name="Pavesi G."/>
            <person name="Pesole G."/>
            <person name="Petrovsky N."/>
            <person name="Piazza S."/>
            <person name="Reed J."/>
            <person name="Reid J.F."/>
            <person name="Ring B.Z."/>
            <person name="Ringwald M."/>
            <person name="Rost B."/>
            <person name="Ruan Y."/>
            <person name="Salzberg S.L."/>
            <person name="Sandelin A."/>
            <person name="Schneider C."/>
            <person name="Schoenbach C."/>
            <person name="Sekiguchi K."/>
            <person name="Semple C.A."/>
            <person name="Seno S."/>
            <person name="Sessa L."/>
            <person name="Sheng Y."/>
            <person name="Shibata Y."/>
            <person name="Shimada H."/>
            <person name="Shimada K."/>
            <person name="Silva D."/>
            <person name="Sinclair B."/>
            <person name="Sperling S."/>
            <person name="Stupka E."/>
            <person name="Sugiura K."/>
            <person name="Sultana R."/>
            <person name="Takenaka Y."/>
            <person name="Taki K."/>
            <person name="Tammoja K."/>
            <person name="Tan S.L."/>
            <person name="Tang S."/>
            <person name="Taylor M.S."/>
            <person name="Tegner J."/>
            <person name="Teichmann S.A."/>
            <person name="Ueda H.R."/>
            <person name="van Nimwegen E."/>
            <person name="Verardo R."/>
            <person name="Wei C.L."/>
            <person name="Yagi K."/>
            <person name="Yamanishi H."/>
            <person name="Zabarovsky E."/>
            <person name="Zhu S."/>
            <person name="Zimmer A."/>
            <person name="Hide W."/>
            <person name="Bult C."/>
            <person name="Grimmond S.M."/>
            <person name="Teasdale R.D."/>
            <person name="Liu E.T."/>
            <person name="Brusic V."/>
            <person name="Quackenbush J."/>
            <person name="Wahlestedt C."/>
            <person name="Mattick J.S."/>
            <person name="Hume D.A."/>
            <person name="Kai C."/>
            <person name="Sasaki D."/>
            <person name="Tomaru Y."/>
            <person name="Fukuda S."/>
            <person name="Kanamori-Katayama M."/>
            <person name="Suzuki M."/>
            <person name="Aoki J."/>
            <person name="Arakawa T."/>
            <person name="Iida J."/>
            <person name="Imamura K."/>
            <person name="Itoh M."/>
            <person name="Kato T."/>
            <person name="Kawaji H."/>
            <person name="Kawagashira N."/>
            <person name="Kawashima T."/>
            <person name="Kojima M."/>
            <person name="Kondo S."/>
            <person name="Konno H."/>
            <person name="Nakano K."/>
            <person name="Ninomiya N."/>
            <person name="Nishio T."/>
            <person name="Okada M."/>
            <person name="Plessy C."/>
            <person name="Shibata K."/>
            <person name="Shiraki T."/>
            <person name="Suzuki S."/>
            <person name="Tagami M."/>
            <person name="Waki K."/>
            <person name="Watahiki A."/>
            <person name="Okamura-Oho Y."/>
            <person name="Suzuki H."/>
            <person name="Kawai J."/>
            <person name="Hayashizaki Y."/>
        </authorList>
    </citation>
    <scope>NUCLEOTIDE SEQUENCE [LARGE SCALE MRNA] (ISOFORM 1)</scope>
    <source>
        <strain>C57BL/6J</strain>
        <tissue>Bone marrow</tissue>
    </source>
</reference>
<reference key="2">
    <citation type="submission" date="2005-02" db="EMBL/GenBank/DDBJ databases">
        <title>Prediction of the coding sequences of mouse homologues of KIAA gene. The complete nucleotide sequences of mouse KIAA-homologous cDNAs identified by screening of terminal sequences of cDNA clones randomly sampled from size-fractionated libraries.</title>
        <authorList>
            <person name="Okazaki N."/>
            <person name="Kikuno R.F."/>
            <person name="Ohara R."/>
            <person name="Inamoto S."/>
            <person name="Nagase T."/>
            <person name="Ohara O."/>
            <person name="Koga H."/>
        </authorList>
    </citation>
    <scope>NUCLEOTIDE SEQUENCE [LARGE SCALE MRNA] (ISOFORM 3)</scope>
    <source>
        <tissue>Brain</tissue>
    </source>
</reference>
<reference key="3">
    <citation type="journal article" date="2009" name="PLoS Biol.">
        <title>Lineage-specific biology revealed by a finished genome assembly of the mouse.</title>
        <authorList>
            <person name="Church D.M."/>
            <person name="Goodstadt L."/>
            <person name="Hillier L.W."/>
            <person name="Zody M.C."/>
            <person name="Goldstein S."/>
            <person name="She X."/>
            <person name="Bult C.J."/>
            <person name="Agarwala R."/>
            <person name="Cherry J.L."/>
            <person name="DiCuccio M."/>
            <person name="Hlavina W."/>
            <person name="Kapustin Y."/>
            <person name="Meric P."/>
            <person name="Maglott D."/>
            <person name="Birtle Z."/>
            <person name="Marques A.C."/>
            <person name="Graves T."/>
            <person name="Zhou S."/>
            <person name="Teague B."/>
            <person name="Potamousis K."/>
            <person name="Churas C."/>
            <person name="Place M."/>
            <person name="Herschleb J."/>
            <person name="Runnheim R."/>
            <person name="Forrest D."/>
            <person name="Amos-Landgraf J."/>
            <person name="Schwartz D.C."/>
            <person name="Cheng Z."/>
            <person name="Lindblad-Toh K."/>
            <person name="Eichler E.E."/>
            <person name="Ponting C.P."/>
        </authorList>
    </citation>
    <scope>NUCLEOTIDE SEQUENCE [LARGE SCALE GENOMIC DNA]</scope>
    <source>
        <strain>C57BL/6J</strain>
    </source>
</reference>
<reference key="4">
    <citation type="journal article" date="2004" name="Genome Res.">
        <title>The status, quality, and expansion of the NIH full-length cDNA project: the Mammalian Gene Collection (MGC).</title>
        <authorList>
            <consortium name="The MGC Project Team"/>
        </authorList>
    </citation>
    <scope>NUCLEOTIDE SEQUENCE [LARGE SCALE MRNA] (ISOFORMS 1; 2 AND 4)</scope>
    <source>
        <strain>C57BL/6J</strain>
        <strain>FVB/N</strain>
        <tissue>Brain</tissue>
        <tissue>Colon</tissue>
        <tissue>Mammary tumor</tissue>
        <tissue>Salivary gland</tissue>
    </source>
</reference>
<reference key="5">
    <citation type="submission" date="2007-04" db="UniProtKB">
        <authorList>
            <person name="Lubec G."/>
            <person name="Klug S."/>
            <person name="Kang S.U."/>
        </authorList>
    </citation>
    <scope>PROTEIN SEQUENCE OF 123-135; 185-204; 311-319; 561-568; 616-633 AND 916-925</scope>
    <scope>IDENTIFICATION BY MASS SPECTROMETRY</scope>
    <source>
        <strain>C57BL/6J</strain>
        <tissue>Brain</tissue>
        <tissue>Hippocampus</tissue>
    </source>
</reference>
<reference key="6">
    <citation type="journal article" date="1993" name="Proc. Natl. Acad. Sci. U.S.A.">
        <title>A ubiquitous protein is the source of naturally occurring peptides that are recognized by a CD8+ T-cell clone.</title>
        <authorList>
            <person name="Udaka K."/>
            <person name="Tsomides T.J."/>
            <person name="Walden P."/>
            <person name="Fukusen N."/>
            <person name="Eisen H.N."/>
        </authorList>
    </citation>
    <scope>NUCLEOTIDE SEQUENCE [MRNA] OF 829-958 (ISOFORMS 1/2/3/4)</scope>
    <source>
        <strain>BALB/cJ</strain>
    </source>
</reference>
<reference key="7">
    <citation type="journal article" date="1992" name="Cell">
        <title>A naturally occurring peptide recognized by alloreactive CD8+ cytotoxic T lymphocytes in association with a class I MHC protein.</title>
        <authorList>
            <person name="Udaka K."/>
            <person name="Tsomides T.J."/>
            <person name="Eisen H.N."/>
        </authorList>
    </citation>
    <scope>PROTEIN SEQUENCE OF 933-939</scope>
</reference>
<reference key="8">
    <citation type="journal article" date="2010" name="Cell">
        <title>A tissue-specific atlas of mouse protein phosphorylation and expression.</title>
        <authorList>
            <person name="Huttlin E.L."/>
            <person name="Jedrychowski M.P."/>
            <person name="Elias J.E."/>
            <person name="Goswami T."/>
            <person name="Rad R."/>
            <person name="Beausoleil S.A."/>
            <person name="Villen J."/>
            <person name="Haas W."/>
            <person name="Sowa M.E."/>
            <person name="Gygi S.P."/>
        </authorList>
    </citation>
    <scope>PHOSPHORYLATION [LARGE SCALE ANALYSIS] AT SER-100</scope>
    <scope>IDENTIFICATION BY MASS SPECTROMETRY [LARGE SCALE ANALYSIS]</scope>
    <source>
        <tissue>Brain</tissue>
        <tissue>Brown adipose tissue</tissue>
        <tissue>Heart</tissue>
        <tissue>Kidney</tissue>
        <tissue>Liver</tissue>
        <tissue>Lung</tissue>
        <tissue>Pancreas</tissue>
        <tissue>Spleen</tissue>
        <tissue>Testis</tissue>
    </source>
</reference>
<reference key="9">
    <citation type="journal article" date="2013" name="Mol. Cell">
        <title>SIRT5-mediated lysine desuccinylation impacts diverse metabolic pathways.</title>
        <authorList>
            <person name="Park J."/>
            <person name="Chen Y."/>
            <person name="Tishkoff D.X."/>
            <person name="Peng C."/>
            <person name="Tan M."/>
            <person name="Dai L."/>
            <person name="Xie Z."/>
            <person name="Zhang Y."/>
            <person name="Zwaans B.M."/>
            <person name="Skinner M.E."/>
            <person name="Lombard D.B."/>
            <person name="Zhao Y."/>
        </authorList>
    </citation>
    <scope>SUCCINYLATION [LARGE SCALE ANALYSIS] AT LYS-74 AND LYS-564</scope>
    <scope>IDENTIFICATION BY MASS SPECTROMETRY [LARGE SCALE ANALYSIS]</scope>
    <source>
        <tissue>Liver</tissue>
    </source>
</reference>
<reference key="10">
    <citation type="journal article" date="2013" name="Proc. Natl. Acad. Sci. U.S.A.">
        <title>Label-free quantitative proteomics of the lysine acetylome in mitochondria identifies substrates of SIRT3 in metabolic pathways.</title>
        <authorList>
            <person name="Rardin M.J."/>
            <person name="Newman J.C."/>
            <person name="Held J.M."/>
            <person name="Cusack M.P."/>
            <person name="Sorensen D.J."/>
            <person name="Li B."/>
            <person name="Schilling B."/>
            <person name="Mooney S.D."/>
            <person name="Kahn C.R."/>
            <person name="Verdin E."/>
            <person name="Gibson B.W."/>
        </authorList>
    </citation>
    <scope>ACETYLATION [LARGE SCALE ANALYSIS] AT LYS-401</scope>
    <scope>IDENTIFICATION BY MASS SPECTROMETRY [LARGE SCALE ANALYSIS]</scope>
    <source>
        <tissue>Liver</tissue>
    </source>
</reference>
<reference key="11">
    <citation type="journal article" date="2023" name="Open Biol.">
        <title>MRPS36 provides a structural link in the eukaryotic 2-oxoglutarate dehydrogenase complex.</title>
        <authorList>
            <person name="Hevler J.F."/>
            <person name="Albanese P."/>
            <person name="Cabrera-Orefice A."/>
            <person name="Potter A."/>
            <person name="Jankevics A."/>
            <person name="Misic J."/>
            <person name="Scheltema R.A."/>
            <person name="Brandt U."/>
            <person name="Arnold S."/>
            <person name="Heck A.J.R."/>
        </authorList>
    </citation>
    <scope>SUBCELLULAR LOCATION</scope>
    <scope>SUBUNIT</scope>
</reference>